<accession>Q8K2K6</accession>
<accession>O70448</accession>
<accession>Q8BQL5</accession>
<accession>Q8CDK9</accession>
<proteinExistence type="evidence at protein level"/>
<comment type="function">
    <text evidence="5">Required for vesicle docking or fusion during acrosome biogenesis. May play a role in RNA trafficking or localization.</text>
</comment>
<comment type="subunit">
    <text evidence="1 5 7">Interacts with FCHO1 (By similarity). Interacts with EPS15R and EPS15.</text>
</comment>
<comment type="subcellular location">
    <subcellularLocation>
        <location evidence="2">Nucleus</location>
    </subcellularLocation>
    <subcellularLocation>
        <location evidence="2">Cytoplasmic vesicle</location>
    </subcellularLocation>
    <text evidence="5">Associated with the cytosolic surface of proacrosomic vesicles of early round spermatids.</text>
</comment>
<comment type="alternative products">
    <event type="alternative splicing"/>
    <isoform>
        <id>Q8K2K6-4</id>
        <name>4</name>
        <sequence type="displayed"/>
    </isoform>
    <isoform>
        <id>Q8K2K6-1</id>
        <name>1</name>
        <sequence type="described" ref="VSP_017602"/>
    </isoform>
    <isoform>
        <id>Q8K2K6-2</id>
        <name>2</name>
        <sequence type="described" ref="VSP_010664"/>
    </isoform>
    <isoform>
        <id>Q8K2K6-3</id>
        <name>3</name>
        <sequence type="described" ref="VSP_010665"/>
    </isoform>
</comment>
<comment type="tissue specificity">
    <text evidence="6">Expressed in the testes (at protein level).</text>
</comment>
<comment type="developmental stage">
    <text evidence="5">Highly expressed during spermiogenesis.</text>
</comment>
<comment type="domain">
    <text>Contains FG repeats.</text>
</comment>
<comment type="PTM">
    <text evidence="1">O-glycosylated.</text>
</comment>
<comment type="disruption phenotype">
    <text evidence="5">Mice have a normal life-span and show no apparent abnormalities. Females display normal fertility but males are infertile due to a lack of acrosome in their spermatozoa.</text>
</comment>
<sequence>MAASAKRKQEEKHLKMLRDMTGLPHNRKCFDCDQRGPTYVNMTVGSFVCTSCSGSLRGLNPPHRVKSISMTTFTQQEIEFLQKHGNEVCKQIWLGLFDDRSSAIPDFRDPQKVKEFLQEKYEKKRWYVPPEQAKVVASVHASISGSSASSTSSTPEVKPLKSLLGESAPALHLNKGTPSQSPVVGRSQGQQQEKKQFDLLSDLGSDIFAAPAPQSTATANFANFAHFNSHAAQNSANADFANFDAFGQSSGSSNFGGFPTASHSSFQPQTTGGSAGSVNANFAHFDNFPKSSSADFGTFSTSQSHQTASTVSKVSTNKAGLQTADKYAALANLDNIFSAGQGGDQGSGFGTTGKAPVGSVVSVPSHSSASSDKYAALAELDSVFSSAATSSNAYTPTSNASSSVFGTVPVGASAQTQPASSGPAPFGATPSTNPFVAATGPSAASSTNPFQTNARGATAATFGTASMSMPAGFGTPAQYSLPTSFSGSFQQPAFPAQAAFPQQTAFSQQPNGAGFATFGQTKPVVTPFGQVAAAGVSSNPFMTGAPTGQLPTGSSSTNPFL</sequence>
<dbReference type="EMBL" id="AK049400">
    <property type="protein sequence ID" value="BAC33736.1"/>
    <property type="molecule type" value="mRNA"/>
</dbReference>
<dbReference type="EMBL" id="AK029917">
    <property type="protein sequence ID" value="BAC26675.1"/>
    <property type="molecule type" value="mRNA"/>
</dbReference>
<dbReference type="EMBL" id="AK048326">
    <property type="protein sequence ID" value="BAC33303.1"/>
    <property type="molecule type" value="mRNA"/>
</dbReference>
<dbReference type="EMBL" id="AF057287">
    <property type="protein sequence ID" value="AAC97477.1"/>
    <property type="molecule type" value="mRNA"/>
</dbReference>
<dbReference type="EMBL" id="BC031154">
    <property type="protein sequence ID" value="AAH31154.1"/>
    <property type="molecule type" value="mRNA"/>
</dbReference>
<dbReference type="CCDS" id="CCDS15100.1">
    <molecule id="Q8K2K6-1"/>
</dbReference>
<dbReference type="CCDS" id="CCDS78634.1">
    <molecule id="Q8K2K6-3"/>
</dbReference>
<dbReference type="CCDS" id="CCDS87854.1">
    <molecule id="Q8K2K6-4"/>
</dbReference>
<dbReference type="RefSeq" id="NP_001297642.1">
    <molecule id="Q8K2K6-3"/>
    <property type="nucleotide sequence ID" value="NM_001310713.1"/>
</dbReference>
<dbReference type="RefSeq" id="NP_001355779.1">
    <molecule id="Q8K2K6-4"/>
    <property type="nucleotide sequence ID" value="NM_001368850.1"/>
</dbReference>
<dbReference type="RefSeq" id="NP_034602.1">
    <molecule id="Q8K2K6-1"/>
    <property type="nucleotide sequence ID" value="NM_010472.3"/>
</dbReference>
<dbReference type="RefSeq" id="XP_006496496.1">
    <property type="nucleotide sequence ID" value="XM_006496433.3"/>
</dbReference>
<dbReference type="BioGRID" id="200417">
    <property type="interactions" value="15"/>
</dbReference>
<dbReference type="ELM" id="Q8K2K6"/>
<dbReference type="FunCoup" id="Q8K2K6">
    <property type="interactions" value="3100"/>
</dbReference>
<dbReference type="STRING" id="10090.ENSMUSP00000140170"/>
<dbReference type="GlyCosmos" id="Q8K2K6">
    <property type="glycosylation" value="1 site, No reported glycans"/>
</dbReference>
<dbReference type="GlyGen" id="Q8K2K6">
    <property type="glycosylation" value="14 sites, 1 O-linked glycan (13 sites)"/>
</dbReference>
<dbReference type="iPTMnet" id="Q8K2K6"/>
<dbReference type="PhosphoSitePlus" id="Q8K2K6"/>
<dbReference type="SwissPalm" id="Q8K2K6"/>
<dbReference type="jPOST" id="Q8K2K6"/>
<dbReference type="PaxDb" id="10090-ENSMUSP00000140785"/>
<dbReference type="PeptideAtlas" id="Q8K2K6"/>
<dbReference type="ProteomicsDB" id="285562">
    <molecule id="Q8K2K6-4"/>
</dbReference>
<dbReference type="ProteomicsDB" id="285563">
    <molecule id="Q8K2K6-1"/>
</dbReference>
<dbReference type="ProteomicsDB" id="285564">
    <molecule id="Q8K2K6-2"/>
</dbReference>
<dbReference type="ProteomicsDB" id="285565">
    <molecule id="Q8K2K6-3"/>
</dbReference>
<dbReference type="Pumba" id="Q8K2K6"/>
<dbReference type="Antibodypedia" id="1598">
    <property type="antibodies" value="221 antibodies from 31 providers"/>
</dbReference>
<dbReference type="DNASU" id="15463"/>
<dbReference type="Ensembl" id="ENSMUST00000063380.11">
    <molecule id="Q8K2K6-2"/>
    <property type="protein sequence ID" value="ENSMUSP00000070250.6"/>
    <property type="gene ID" value="ENSMUSG00000026159.14"/>
</dbReference>
<dbReference type="Ensembl" id="ENSMUST00000113444.8">
    <molecule id="Q8K2K6-3"/>
    <property type="protein sequence ID" value="ENSMUSP00000109071.3"/>
    <property type="gene ID" value="ENSMUSG00000026159.14"/>
</dbReference>
<dbReference type="Ensembl" id="ENSMUST00000186302.7">
    <molecule id="Q8K2K6-4"/>
    <property type="protein sequence ID" value="ENSMUSP00000140785.2"/>
    <property type="gene ID" value="ENSMUSG00000026159.14"/>
</dbReference>
<dbReference type="Ensembl" id="ENSMUST00000189220.7">
    <molecule id="Q8K2K6-1"/>
    <property type="protein sequence ID" value="ENSMUSP00000140170.2"/>
    <property type="gene ID" value="ENSMUSG00000026159.14"/>
</dbReference>
<dbReference type="GeneID" id="15463"/>
<dbReference type="KEGG" id="mmu:15463"/>
<dbReference type="UCSC" id="uc007bse.1">
    <molecule id="Q8K2K6-1"/>
    <property type="organism name" value="mouse"/>
</dbReference>
<dbReference type="UCSC" id="uc007bsf.1">
    <molecule id="Q8K2K6-2"/>
    <property type="organism name" value="mouse"/>
</dbReference>
<dbReference type="UCSC" id="uc007bsg.1">
    <molecule id="Q8K2K6-3"/>
    <property type="organism name" value="mouse"/>
</dbReference>
<dbReference type="AGR" id="MGI:1333754"/>
<dbReference type="CTD" id="3267"/>
<dbReference type="MGI" id="MGI:1333754">
    <property type="gene designation" value="Agfg1"/>
</dbReference>
<dbReference type="VEuPathDB" id="HostDB:ENSMUSG00000026159"/>
<dbReference type="eggNOG" id="KOG0702">
    <property type="taxonomic scope" value="Eukaryota"/>
</dbReference>
<dbReference type="GeneTree" id="ENSGT00940000155511"/>
<dbReference type="HOGENOM" id="CLU_027801_1_0_1"/>
<dbReference type="InParanoid" id="Q8K2K6"/>
<dbReference type="OMA" id="SDCKRNK"/>
<dbReference type="PhylomeDB" id="Q8K2K6"/>
<dbReference type="TreeFam" id="TF325357"/>
<dbReference type="Reactome" id="R-MMU-8856828">
    <property type="pathway name" value="Clathrin-mediated endocytosis"/>
</dbReference>
<dbReference type="BioGRID-ORCS" id="15463">
    <property type="hits" value="0 hits in 79 CRISPR screens"/>
</dbReference>
<dbReference type="ChiTaRS" id="Agfg1">
    <property type="organism name" value="mouse"/>
</dbReference>
<dbReference type="PRO" id="PR:Q8K2K6"/>
<dbReference type="Proteomes" id="UP000000589">
    <property type="component" value="Chromosome 1"/>
</dbReference>
<dbReference type="RNAct" id="Q8K2K6">
    <property type="molecule type" value="protein"/>
</dbReference>
<dbReference type="Bgee" id="ENSMUSG00000026159">
    <property type="expression patterns" value="Expressed in placenta labyrinth and 262 other cell types or tissues"/>
</dbReference>
<dbReference type="ExpressionAtlas" id="Q8K2K6">
    <property type="expression patterns" value="baseline and differential"/>
</dbReference>
<dbReference type="GO" id="GO:0042995">
    <property type="term" value="C:cell projection"/>
    <property type="evidence" value="ECO:0000314"/>
    <property type="project" value="MGI"/>
</dbReference>
<dbReference type="GO" id="GO:0031410">
    <property type="term" value="C:cytoplasmic vesicle"/>
    <property type="evidence" value="ECO:0000314"/>
    <property type="project" value="MGI"/>
</dbReference>
<dbReference type="GO" id="GO:0043025">
    <property type="term" value="C:neuronal cell body"/>
    <property type="evidence" value="ECO:0000314"/>
    <property type="project" value="MGI"/>
</dbReference>
<dbReference type="GO" id="GO:0005634">
    <property type="term" value="C:nucleus"/>
    <property type="evidence" value="ECO:0007669"/>
    <property type="project" value="UniProtKB-SubCell"/>
</dbReference>
<dbReference type="GO" id="GO:0003677">
    <property type="term" value="F:DNA binding"/>
    <property type="evidence" value="ECO:0007669"/>
    <property type="project" value="UniProtKB-KW"/>
</dbReference>
<dbReference type="GO" id="GO:0005096">
    <property type="term" value="F:GTPase activator activity"/>
    <property type="evidence" value="ECO:0007669"/>
    <property type="project" value="InterPro"/>
</dbReference>
<dbReference type="GO" id="GO:0008270">
    <property type="term" value="F:zinc ion binding"/>
    <property type="evidence" value="ECO:0007669"/>
    <property type="project" value="UniProtKB-KW"/>
</dbReference>
<dbReference type="GO" id="GO:0001675">
    <property type="term" value="P:acrosome assembly"/>
    <property type="evidence" value="ECO:0000315"/>
    <property type="project" value="MGI"/>
</dbReference>
<dbReference type="GO" id="GO:0045109">
    <property type="term" value="P:intermediate filament organization"/>
    <property type="evidence" value="ECO:0000315"/>
    <property type="project" value="MGI"/>
</dbReference>
<dbReference type="GO" id="GO:0007289">
    <property type="term" value="P:spermatid nucleus differentiation"/>
    <property type="evidence" value="ECO:0000315"/>
    <property type="project" value="MGI"/>
</dbReference>
<dbReference type="CDD" id="cd08857">
    <property type="entry name" value="ArfGap_AGFG1"/>
    <property type="match status" value="1"/>
</dbReference>
<dbReference type="FunFam" id="1.10.220.150:FF:000005">
    <property type="entry name" value="Arf-GAP domain and FG repeat-containing protein 1"/>
    <property type="match status" value="1"/>
</dbReference>
<dbReference type="FunFam" id="3.30.450.50:FF:000005">
    <property type="entry name" value="arf-GAP domain and FG repeat-containing protein 1"/>
    <property type="match status" value="1"/>
</dbReference>
<dbReference type="Gene3D" id="1.10.220.150">
    <property type="entry name" value="Arf GTPase activating protein"/>
    <property type="match status" value="1"/>
</dbReference>
<dbReference type="Gene3D" id="3.30.450.50">
    <property type="entry name" value="Longin domain"/>
    <property type="match status" value="1"/>
</dbReference>
<dbReference type="InterPro" id="IPR052248">
    <property type="entry name" value="Arf-GAP_FG-repeat_protein"/>
</dbReference>
<dbReference type="InterPro" id="IPR037278">
    <property type="entry name" value="ARFGAP/RecO"/>
</dbReference>
<dbReference type="InterPro" id="IPR001164">
    <property type="entry name" value="ArfGAP_dom"/>
</dbReference>
<dbReference type="InterPro" id="IPR038508">
    <property type="entry name" value="ArfGAP_dom_sf"/>
</dbReference>
<dbReference type="PANTHER" id="PTHR46134:SF1">
    <property type="entry name" value="ARF-GAP DOMAIN AND FG REPEAT-CONTAINING PROTEIN 1"/>
    <property type="match status" value="1"/>
</dbReference>
<dbReference type="PANTHER" id="PTHR46134">
    <property type="entry name" value="DRONGO, ISOFORM F"/>
    <property type="match status" value="1"/>
</dbReference>
<dbReference type="Pfam" id="PF01412">
    <property type="entry name" value="ArfGap"/>
    <property type="match status" value="1"/>
</dbReference>
<dbReference type="PRINTS" id="PR00405">
    <property type="entry name" value="REVINTRACTNG"/>
</dbReference>
<dbReference type="SMART" id="SM00105">
    <property type="entry name" value="ArfGap"/>
    <property type="match status" value="1"/>
</dbReference>
<dbReference type="SUPFAM" id="SSF57863">
    <property type="entry name" value="ArfGap/RecO-like zinc finger"/>
    <property type="match status" value="1"/>
</dbReference>
<dbReference type="PROSITE" id="PS50115">
    <property type="entry name" value="ARFGAP"/>
    <property type="match status" value="1"/>
</dbReference>
<evidence type="ECO:0000250" key="1"/>
<evidence type="ECO:0000250" key="2">
    <source>
        <dbReference type="UniProtKB" id="P52594"/>
    </source>
</evidence>
<evidence type="ECO:0000255" key="3">
    <source>
        <dbReference type="PROSITE-ProRule" id="PRU00288"/>
    </source>
</evidence>
<evidence type="ECO:0000256" key="4">
    <source>
        <dbReference type="SAM" id="MobiDB-lite"/>
    </source>
</evidence>
<evidence type="ECO:0000269" key="5">
    <source>
    </source>
</evidence>
<evidence type="ECO:0000269" key="6">
    <source>
    </source>
</evidence>
<evidence type="ECO:0000269" key="7">
    <source>
    </source>
</evidence>
<evidence type="ECO:0000303" key="8">
    <source>
    </source>
</evidence>
<evidence type="ECO:0000303" key="9">
    <source>
    </source>
</evidence>
<evidence type="ECO:0000305" key="10"/>
<evidence type="ECO:0007744" key="11">
    <source>
    </source>
</evidence>
<evidence type="ECO:0007744" key="12">
    <source>
    </source>
</evidence>
<evidence type="ECO:0007744" key="13">
    <source>
    </source>
</evidence>
<organism>
    <name type="scientific">Mus musculus</name>
    <name type="common">Mouse</name>
    <dbReference type="NCBI Taxonomy" id="10090"/>
    <lineage>
        <taxon>Eukaryota</taxon>
        <taxon>Metazoa</taxon>
        <taxon>Chordata</taxon>
        <taxon>Craniata</taxon>
        <taxon>Vertebrata</taxon>
        <taxon>Euteleostomi</taxon>
        <taxon>Mammalia</taxon>
        <taxon>Eutheria</taxon>
        <taxon>Euarchontoglires</taxon>
        <taxon>Glires</taxon>
        <taxon>Rodentia</taxon>
        <taxon>Myomorpha</taxon>
        <taxon>Muroidea</taxon>
        <taxon>Muridae</taxon>
        <taxon>Murinae</taxon>
        <taxon>Mus</taxon>
        <taxon>Mus</taxon>
    </lineage>
</organism>
<gene>
    <name type="primary">Agfg1</name>
    <name type="synonym">Hrb</name>
    <name type="synonym">Rip</name>
</gene>
<reference key="1">
    <citation type="journal article" date="2005" name="Science">
        <title>The transcriptional landscape of the mammalian genome.</title>
        <authorList>
            <person name="Carninci P."/>
            <person name="Kasukawa T."/>
            <person name="Katayama S."/>
            <person name="Gough J."/>
            <person name="Frith M.C."/>
            <person name="Maeda N."/>
            <person name="Oyama R."/>
            <person name="Ravasi T."/>
            <person name="Lenhard B."/>
            <person name="Wells C."/>
            <person name="Kodzius R."/>
            <person name="Shimokawa K."/>
            <person name="Bajic V.B."/>
            <person name="Brenner S.E."/>
            <person name="Batalov S."/>
            <person name="Forrest A.R."/>
            <person name="Zavolan M."/>
            <person name="Davis M.J."/>
            <person name="Wilming L.G."/>
            <person name="Aidinis V."/>
            <person name="Allen J.E."/>
            <person name="Ambesi-Impiombato A."/>
            <person name="Apweiler R."/>
            <person name="Aturaliya R.N."/>
            <person name="Bailey T.L."/>
            <person name="Bansal M."/>
            <person name="Baxter L."/>
            <person name="Beisel K.W."/>
            <person name="Bersano T."/>
            <person name="Bono H."/>
            <person name="Chalk A.M."/>
            <person name="Chiu K.P."/>
            <person name="Choudhary V."/>
            <person name="Christoffels A."/>
            <person name="Clutterbuck D.R."/>
            <person name="Crowe M.L."/>
            <person name="Dalla E."/>
            <person name="Dalrymple B.P."/>
            <person name="de Bono B."/>
            <person name="Della Gatta G."/>
            <person name="di Bernardo D."/>
            <person name="Down T."/>
            <person name="Engstrom P."/>
            <person name="Fagiolini M."/>
            <person name="Faulkner G."/>
            <person name="Fletcher C.F."/>
            <person name="Fukushima T."/>
            <person name="Furuno M."/>
            <person name="Futaki S."/>
            <person name="Gariboldi M."/>
            <person name="Georgii-Hemming P."/>
            <person name="Gingeras T.R."/>
            <person name="Gojobori T."/>
            <person name="Green R.E."/>
            <person name="Gustincich S."/>
            <person name="Harbers M."/>
            <person name="Hayashi Y."/>
            <person name="Hensch T.K."/>
            <person name="Hirokawa N."/>
            <person name="Hill D."/>
            <person name="Huminiecki L."/>
            <person name="Iacono M."/>
            <person name="Ikeo K."/>
            <person name="Iwama A."/>
            <person name="Ishikawa T."/>
            <person name="Jakt M."/>
            <person name="Kanapin A."/>
            <person name="Katoh M."/>
            <person name="Kawasawa Y."/>
            <person name="Kelso J."/>
            <person name="Kitamura H."/>
            <person name="Kitano H."/>
            <person name="Kollias G."/>
            <person name="Krishnan S.P."/>
            <person name="Kruger A."/>
            <person name="Kummerfeld S.K."/>
            <person name="Kurochkin I.V."/>
            <person name="Lareau L.F."/>
            <person name="Lazarevic D."/>
            <person name="Lipovich L."/>
            <person name="Liu J."/>
            <person name="Liuni S."/>
            <person name="McWilliam S."/>
            <person name="Madan Babu M."/>
            <person name="Madera M."/>
            <person name="Marchionni L."/>
            <person name="Matsuda H."/>
            <person name="Matsuzawa S."/>
            <person name="Miki H."/>
            <person name="Mignone F."/>
            <person name="Miyake S."/>
            <person name="Morris K."/>
            <person name="Mottagui-Tabar S."/>
            <person name="Mulder N."/>
            <person name="Nakano N."/>
            <person name="Nakauchi H."/>
            <person name="Ng P."/>
            <person name="Nilsson R."/>
            <person name="Nishiguchi S."/>
            <person name="Nishikawa S."/>
            <person name="Nori F."/>
            <person name="Ohara O."/>
            <person name="Okazaki Y."/>
            <person name="Orlando V."/>
            <person name="Pang K.C."/>
            <person name="Pavan W.J."/>
            <person name="Pavesi G."/>
            <person name="Pesole G."/>
            <person name="Petrovsky N."/>
            <person name="Piazza S."/>
            <person name="Reed J."/>
            <person name="Reid J.F."/>
            <person name="Ring B.Z."/>
            <person name="Ringwald M."/>
            <person name="Rost B."/>
            <person name="Ruan Y."/>
            <person name="Salzberg S.L."/>
            <person name="Sandelin A."/>
            <person name="Schneider C."/>
            <person name="Schoenbach C."/>
            <person name="Sekiguchi K."/>
            <person name="Semple C.A."/>
            <person name="Seno S."/>
            <person name="Sessa L."/>
            <person name="Sheng Y."/>
            <person name="Shibata Y."/>
            <person name="Shimada H."/>
            <person name="Shimada K."/>
            <person name="Silva D."/>
            <person name="Sinclair B."/>
            <person name="Sperling S."/>
            <person name="Stupka E."/>
            <person name="Sugiura K."/>
            <person name="Sultana R."/>
            <person name="Takenaka Y."/>
            <person name="Taki K."/>
            <person name="Tammoja K."/>
            <person name="Tan S.L."/>
            <person name="Tang S."/>
            <person name="Taylor M.S."/>
            <person name="Tegner J."/>
            <person name="Teichmann S.A."/>
            <person name="Ueda H.R."/>
            <person name="van Nimwegen E."/>
            <person name="Verardo R."/>
            <person name="Wei C.L."/>
            <person name="Yagi K."/>
            <person name="Yamanishi H."/>
            <person name="Zabarovsky E."/>
            <person name="Zhu S."/>
            <person name="Zimmer A."/>
            <person name="Hide W."/>
            <person name="Bult C."/>
            <person name="Grimmond S.M."/>
            <person name="Teasdale R.D."/>
            <person name="Liu E.T."/>
            <person name="Brusic V."/>
            <person name="Quackenbush J."/>
            <person name="Wahlestedt C."/>
            <person name="Mattick J.S."/>
            <person name="Hume D.A."/>
            <person name="Kai C."/>
            <person name="Sasaki D."/>
            <person name="Tomaru Y."/>
            <person name="Fukuda S."/>
            <person name="Kanamori-Katayama M."/>
            <person name="Suzuki M."/>
            <person name="Aoki J."/>
            <person name="Arakawa T."/>
            <person name="Iida J."/>
            <person name="Imamura K."/>
            <person name="Itoh M."/>
            <person name="Kato T."/>
            <person name="Kawaji H."/>
            <person name="Kawagashira N."/>
            <person name="Kawashima T."/>
            <person name="Kojima M."/>
            <person name="Kondo S."/>
            <person name="Konno H."/>
            <person name="Nakano K."/>
            <person name="Ninomiya N."/>
            <person name="Nishio T."/>
            <person name="Okada M."/>
            <person name="Plessy C."/>
            <person name="Shibata K."/>
            <person name="Shiraki T."/>
            <person name="Suzuki S."/>
            <person name="Tagami M."/>
            <person name="Waki K."/>
            <person name="Watahiki A."/>
            <person name="Okamura-Oho Y."/>
            <person name="Suzuki H."/>
            <person name="Kawai J."/>
            <person name="Hayashizaki Y."/>
        </authorList>
    </citation>
    <scope>NUCLEOTIDE SEQUENCE [LARGE SCALE MRNA] (ISOFORMS 1; 2; 3 AND 4)</scope>
    <source>
        <strain>C57BL/6J</strain>
        <tissue>Head</tissue>
        <tissue>Testis</tissue>
    </source>
</reference>
<reference key="2">
    <citation type="journal article" date="2004" name="Genome Res.">
        <title>The status, quality, and expansion of the NIH full-length cDNA project: the Mammalian Gene Collection (MGC).</title>
        <authorList>
            <consortium name="The MGC Project Team"/>
        </authorList>
    </citation>
    <scope>NUCLEOTIDE SEQUENCE [LARGE SCALE MRNA] (ISOFORM 1)</scope>
</reference>
<reference key="3">
    <citation type="journal article" date="1998" name="J. Biol. Chem.">
        <title>Eps15R is a tyrosine kinase substrate with characteristics of a docking protein possibly involved in coated pits-mediated internalization.</title>
        <authorList>
            <person name="Coda L."/>
            <person name="Salcini A.E."/>
            <person name="Confalonieri S."/>
            <person name="Pelicci G."/>
            <person name="Sorkina T."/>
            <person name="Sorkin A."/>
            <person name="Pelicci P.G."/>
            <person name="Di Fiore P.P."/>
        </authorList>
    </citation>
    <scope>INTERACTION WITH EPS15R</scope>
</reference>
<reference key="4">
    <citation type="journal article" date="2001" name="Science">
        <title>Lack of acrosome formation in Hrb-deficient mice.</title>
        <authorList>
            <person name="Kang-Decker N."/>
            <person name="Mantchev G.T."/>
            <person name="Juneja S.C."/>
            <person name="McNiven M.A."/>
            <person name="van Deursen J.M.A."/>
        </authorList>
    </citation>
    <scope>FUNCTION</scope>
    <scope>DEVELOPMENTAL STAGE</scope>
    <scope>SUBCELLULAR LOCATION</scope>
    <scope>INTERACTION WITH EPS15</scope>
    <scope>DISRUPTION PHENOTYPE</scope>
</reference>
<reference key="5">
    <citation type="journal article" date="2007" name="Proc. Natl. Acad. Sci. U.S.A.">
        <title>Large-scale phosphorylation analysis of mouse liver.</title>
        <authorList>
            <person name="Villen J."/>
            <person name="Beausoleil S.A."/>
            <person name="Gerber S.A."/>
            <person name="Gygi S.P."/>
        </authorList>
    </citation>
    <scope>PHOSPHORYLATION [LARGE SCALE ANALYSIS] AT THR-177 AND SER-181</scope>
    <scope>IDENTIFICATION BY MASS SPECTROMETRY [LARGE SCALE ANALYSIS]</scope>
    <source>
        <tissue>Liver</tissue>
    </source>
</reference>
<reference key="6">
    <citation type="journal article" date="2009" name="Immunity">
        <title>The phagosomal proteome in interferon-gamma-activated macrophages.</title>
        <authorList>
            <person name="Trost M."/>
            <person name="English L."/>
            <person name="Lemieux S."/>
            <person name="Courcelles M."/>
            <person name="Desjardins M."/>
            <person name="Thibault P."/>
        </authorList>
    </citation>
    <scope>PHOSPHORYLATION [LARGE SCALE ANALYSIS] AT THR-177 AND SER-181</scope>
    <scope>IDENTIFICATION BY MASS SPECTROMETRY [LARGE SCALE ANALYSIS]</scope>
</reference>
<reference key="7">
    <citation type="journal article" date="2010" name="Cell">
        <title>A tissue-specific atlas of mouse protein phosphorylation and expression.</title>
        <authorList>
            <person name="Huttlin E.L."/>
            <person name="Jedrychowski M.P."/>
            <person name="Elias J.E."/>
            <person name="Goswami T."/>
            <person name="Rad R."/>
            <person name="Beausoleil S.A."/>
            <person name="Villen J."/>
            <person name="Haas W."/>
            <person name="Sowa M.E."/>
            <person name="Gygi S.P."/>
        </authorList>
    </citation>
    <scope>PHOSPHORYLATION [LARGE SCALE ANALYSIS] AT THR-177 AND SER-181</scope>
    <scope>IDENTIFICATION BY MASS SPECTROMETRY [LARGE SCALE ANALYSIS]</scope>
    <source>
        <tissue>Brain</tissue>
        <tissue>Brown adipose tissue</tissue>
        <tissue>Heart</tissue>
        <tissue>Kidney</tissue>
        <tissue>Liver</tissue>
        <tissue>Lung</tissue>
        <tissue>Pancreas</tissue>
        <tissue>Spleen</tissue>
        <tissue>Testis</tissue>
    </source>
</reference>
<reference key="8">
    <citation type="journal article" date="2022" name="Front. Cell Dev. Biol.">
        <title>TMPRSS12 Functions in Meiosis and Spermiogenesis and Is Required for Male Fertility in Mice.</title>
        <authorList>
            <person name="Zhang J."/>
            <person name="Zhou X."/>
            <person name="Wan D."/>
            <person name="Yu L."/>
            <person name="Chen X."/>
            <person name="Yan T."/>
            <person name="Wu Z."/>
            <person name="Zheng M."/>
            <person name="Zhu F."/>
            <person name="Zhu H."/>
        </authorList>
    </citation>
    <scope>TISSUE SPECIFICITY</scope>
</reference>
<protein>
    <recommendedName>
        <fullName>Arf-GAP domain and FG repeat-containing protein 1</fullName>
    </recommendedName>
    <alternativeName>
        <fullName>HIV-1 Rev-binding protein homolog</fullName>
    </alternativeName>
    <alternativeName>
        <fullName>Nucleoporin-like protein RIP</fullName>
    </alternativeName>
</protein>
<name>AGFG1_MOUSE</name>
<keyword id="KW-0025">Alternative splicing</keyword>
<keyword id="KW-0968">Cytoplasmic vesicle</keyword>
<keyword id="KW-0217">Developmental protein</keyword>
<keyword id="KW-0221">Differentiation</keyword>
<keyword id="KW-0238">DNA-binding</keyword>
<keyword id="KW-0325">Glycoprotein</keyword>
<keyword id="KW-0479">Metal-binding</keyword>
<keyword id="KW-0539">Nucleus</keyword>
<keyword id="KW-0597">Phosphoprotein</keyword>
<keyword id="KW-1185">Reference proteome</keyword>
<keyword id="KW-0677">Repeat</keyword>
<keyword id="KW-0744">Spermatogenesis</keyword>
<keyword id="KW-0813">Transport</keyword>
<keyword id="KW-0862">Zinc</keyword>
<keyword id="KW-0863">Zinc-finger</keyword>
<feature type="chain" id="PRO_0000204905" description="Arf-GAP domain and FG repeat-containing protein 1">
    <location>
        <begin position="1"/>
        <end position="561"/>
    </location>
</feature>
<feature type="domain" description="Arf-GAP" evidence="3">
    <location>
        <begin position="11"/>
        <end position="135"/>
    </location>
</feature>
<feature type="zinc finger region" description="C4-type" evidence="3">
    <location>
        <begin position="29"/>
        <end position="52"/>
    </location>
</feature>
<feature type="region of interest" description="Disordered" evidence="4">
    <location>
        <begin position="170"/>
        <end position="193"/>
    </location>
</feature>
<feature type="region of interest" description="Disordered" evidence="4">
    <location>
        <begin position="413"/>
        <end position="433"/>
    </location>
</feature>
<feature type="compositionally biased region" description="Polar residues" evidence="4">
    <location>
        <begin position="176"/>
        <end position="191"/>
    </location>
</feature>
<feature type="modified residue" description="Phosphoserine" evidence="2">
    <location>
        <position position="167"/>
    </location>
</feature>
<feature type="modified residue" description="Phosphothreonine" evidence="11 12 13">
    <location>
        <position position="177"/>
    </location>
</feature>
<feature type="modified residue" description="Phosphoserine" evidence="11 12 13">
    <location>
        <position position="181"/>
    </location>
</feature>
<feature type="modified residue" description="Phosphoserine" evidence="2">
    <location>
        <position position="362"/>
    </location>
</feature>
<feature type="glycosylation site" description="O-linked (GlcNAc) serine" evidence="1">
    <location>
        <position position="367"/>
    </location>
</feature>
<feature type="splice variant" id="VSP_010664" description="In isoform 2." evidence="9">
    <location>
        <begin position="342"/>
        <end position="362"/>
    </location>
</feature>
<feature type="splice variant" id="VSP_010665" description="In isoform 3." evidence="9">
    <location>
        <begin position="428"/>
        <end position="458"/>
    </location>
</feature>
<feature type="splice variant" id="VSP_017602" description="In isoform 1." evidence="8 9">
    <location>
        <begin position="513"/>
        <end position="514"/>
    </location>
</feature>
<feature type="sequence conflict" description="In Ref. 1; BAC33736." evidence="10" ref="1">
    <original>AAS</original>
    <variation>GGR</variation>
    <location>
        <begin position="2"/>
        <end position="4"/>
    </location>
</feature>
<feature type="sequence conflict" description="In Ref. 1; BAC33736." evidence="10" ref="1">
    <original>Q</original>
    <variation>P</variation>
    <location>
        <position position="9"/>
    </location>
</feature>
<feature type="sequence conflict" description="In Ref. 1; BAC33736." evidence="10" ref="1">
    <original>Q</original>
    <variation>H</variation>
    <location>
        <position position="34"/>
    </location>
</feature>
<feature type="sequence conflict" description="In Ref. 1; BAC33736." evidence="10" ref="1">
    <original>T</original>
    <variation>R</variation>
    <location>
        <position position="43"/>
    </location>
</feature>
<feature type="sequence conflict" description="In Ref. 1; BAC33736." evidence="10" ref="1">
    <original>R</original>
    <variation>K</variation>
    <location>
        <position position="57"/>
    </location>
</feature>